<organism>
    <name type="scientific">Oryza sativa subsp. japonica</name>
    <name type="common">Rice</name>
    <dbReference type="NCBI Taxonomy" id="39947"/>
    <lineage>
        <taxon>Eukaryota</taxon>
        <taxon>Viridiplantae</taxon>
        <taxon>Streptophyta</taxon>
        <taxon>Embryophyta</taxon>
        <taxon>Tracheophyta</taxon>
        <taxon>Spermatophyta</taxon>
        <taxon>Magnoliopsida</taxon>
        <taxon>Liliopsida</taxon>
        <taxon>Poales</taxon>
        <taxon>Poaceae</taxon>
        <taxon>BOP clade</taxon>
        <taxon>Oryzoideae</taxon>
        <taxon>Oryzeae</taxon>
        <taxon>Oryzinae</taxon>
        <taxon>Oryza</taxon>
        <taxon>Oryza sativa</taxon>
    </lineage>
</organism>
<name>CIPK8_ORYSJ</name>
<evidence type="ECO:0000250" key="1"/>
<evidence type="ECO:0000255" key="2">
    <source>
        <dbReference type="PROSITE-ProRule" id="PRU00159"/>
    </source>
</evidence>
<evidence type="ECO:0000255" key="3">
    <source>
        <dbReference type="PROSITE-ProRule" id="PRU00256"/>
    </source>
</evidence>
<evidence type="ECO:0000255" key="4">
    <source>
        <dbReference type="PROSITE-ProRule" id="PRU10027"/>
    </source>
</evidence>
<evidence type="ECO:0000269" key="5">
    <source>
    </source>
</evidence>
<evidence type="ECO:0000305" key="6"/>
<sequence>MVGGGALRRVGKYEVGRTIGEGTFAKVKFAQNTESGESVAMKVVDRSSILKHKMADQIKREISIMKLVRHPNVVRLHEVLASRKKIFIILEFITGGELFDKIIRHGRLNEADARRYFQQLIDGVDFCHSKGVYHRDLKPENLLLDSQGNLKISDFGLSAWPAQGGALLRTTCGTPNYVAPEVLSHKGYDGALADTWSCGVILYVLLAGYLPFDEVDLTTLYGKIESAEYSFPAWFPNGAKSLIHRILDPNPDKRIRIEEIRNDEWFKKNYEPTREIESEEVNLDDVNAAFDDPEEDADHTLDDEAGPLTLNAFDLIILSQGLNLAALFDRRQDYDKLQNRFLSRKPAKVIMSSMEVVAQSMGYKTHIRNYKMRVEGLNANKTSHLAVMLEIFEVAPSIFMIELQRAAGDTSDYNKFINNYCSKLDDIIWNFPIEKSKSRISRLSKR</sequence>
<accession>Q5JLD8</accession>
<accession>A0A0P0V3N6</accession>
<reference key="1">
    <citation type="journal article" date="2002" name="Nature">
        <title>The genome sequence and structure of rice chromosome 1.</title>
        <authorList>
            <person name="Sasaki T."/>
            <person name="Matsumoto T."/>
            <person name="Yamamoto K."/>
            <person name="Sakata K."/>
            <person name="Baba T."/>
            <person name="Katayose Y."/>
            <person name="Wu J."/>
            <person name="Niimura Y."/>
            <person name="Cheng Z."/>
            <person name="Nagamura Y."/>
            <person name="Antonio B.A."/>
            <person name="Kanamori H."/>
            <person name="Hosokawa S."/>
            <person name="Masukawa M."/>
            <person name="Arikawa K."/>
            <person name="Chiden Y."/>
            <person name="Hayashi M."/>
            <person name="Okamoto M."/>
            <person name="Ando T."/>
            <person name="Aoki H."/>
            <person name="Arita K."/>
            <person name="Hamada M."/>
            <person name="Harada C."/>
            <person name="Hijishita S."/>
            <person name="Honda M."/>
            <person name="Ichikawa Y."/>
            <person name="Idonuma A."/>
            <person name="Iijima M."/>
            <person name="Ikeda M."/>
            <person name="Ikeno M."/>
            <person name="Ito S."/>
            <person name="Ito T."/>
            <person name="Ito Y."/>
            <person name="Ito Y."/>
            <person name="Iwabuchi A."/>
            <person name="Kamiya K."/>
            <person name="Karasawa W."/>
            <person name="Katagiri S."/>
            <person name="Kikuta A."/>
            <person name="Kobayashi N."/>
            <person name="Kono I."/>
            <person name="Machita K."/>
            <person name="Maehara T."/>
            <person name="Mizuno H."/>
            <person name="Mizubayashi T."/>
            <person name="Mukai Y."/>
            <person name="Nagasaki H."/>
            <person name="Nakashima M."/>
            <person name="Nakama Y."/>
            <person name="Nakamichi Y."/>
            <person name="Nakamura M."/>
            <person name="Namiki N."/>
            <person name="Negishi M."/>
            <person name="Ohta I."/>
            <person name="Ono N."/>
            <person name="Saji S."/>
            <person name="Sakai K."/>
            <person name="Shibata M."/>
            <person name="Shimokawa T."/>
            <person name="Shomura A."/>
            <person name="Song J."/>
            <person name="Takazaki Y."/>
            <person name="Terasawa K."/>
            <person name="Tsuji K."/>
            <person name="Waki K."/>
            <person name="Yamagata H."/>
            <person name="Yamane H."/>
            <person name="Yoshiki S."/>
            <person name="Yoshihara R."/>
            <person name="Yukawa K."/>
            <person name="Zhong H."/>
            <person name="Iwama H."/>
            <person name="Endo T."/>
            <person name="Ito H."/>
            <person name="Hahn J.H."/>
            <person name="Kim H.-I."/>
            <person name="Eun M.-Y."/>
            <person name="Yano M."/>
            <person name="Jiang J."/>
            <person name="Gojobori T."/>
        </authorList>
    </citation>
    <scope>NUCLEOTIDE SEQUENCE [LARGE SCALE GENOMIC DNA]</scope>
    <source>
        <strain>cv. Nipponbare</strain>
    </source>
</reference>
<reference key="2">
    <citation type="journal article" date="2005" name="Nature">
        <title>The map-based sequence of the rice genome.</title>
        <authorList>
            <consortium name="International rice genome sequencing project (IRGSP)"/>
        </authorList>
    </citation>
    <scope>NUCLEOTIDE SEQUENCE [LARGE SCALE GENOMIC DNA]</scope>
    <source>
        <strain>cv. Nipponbare</strain>
    </source>
</reference>
<reference key="3">
    <citation type="journal article" date="2008" name="Nucleic Acids Res.">
        <title>The rice annotation project database (RAP-DB): 2008 update.</title>
        <authorList>
            <consortium name="The rice annotation project (RAP)"/>
        </authorList>
    </citation>
    <scope>GENOME REANNOTATION</scope>
    <source>
        <strain>cv. Nipponbare</strain>
    </source>
</reference>
<reference key="4">
    <citation type="journal article" date="2013" name="Rice">
        <title>Improvement of the Oryza sativa Nipponbare reference genome using next generation sequence and optical map data.</title>
        <authorList>
            <person name="Kawahara Y."/>
            <person name="de la Bastide M."/>
            <person name="Hamilton J.P."/>
            <person name="Kanamori H."/>
            <person name="McCombie W.R."/>
            <person name="Ouyang S."/>
            <person name="Schwartz D.C."/>
            <person name="Tanaka T."/>
            <person name="Wu J."/>
            <person name="Zhou S."/>
            <person name="Childs K.L."/>
            <person name="Davidson R.M."/>
            <person name="Lin H."/>
            <person name="Quesada-Ocampo L."/>
            <person name="Vaillancourt B."/>
            <person name="Sakai H."/>
            <person name="Lee S.S."/>
            <person name="Kim J."/>
            <person name="Numa H."/>
            <person name="Itoh T."/>
            <person name="Buell C.R."/>
            <person name="Matsumoto T."/>
        </authorList>
    </citation>
    <scope>GENOME REANNOTATION</scope>
    <source>
        <strain>cv. Nipponbare</strain>
    </source>
</reference>
<reference key="5">
    <citation type="journal article" date="2003" name="Science">
        <title>Collection, mapping, and annotation of over 28,000 cDNA clones from japonica rice.</title>
        <authorList>
            <consortium name="The rice full-length cDNA consortium"/>
        </authorList>
    </citation>
    <scope>NUCLEOTIDE SEQUENCE [LARGE SCALE MRNA]</scope>
    <source>
        <strain>cv. Nipponbare</strain>
    </source>
</reference>
<reference key="6">
    <citation type="journal article" date="2004" name="Plant Physiol.">
        <title>Calcium sensors and their interacting protein kinases: genomics of the Arabidopsis and rice CBL-CIPK signaling networks.</title>
        <authorList>
            <person name="Kolukisaoglu U."/>
            <person name="Weinl S."/>
            <person name="Blazevic D."/>
            <person name="Batistic O."/>
            <person name="Kudla J."/>
        </authorList>
    </citation>
    <scope>GENE FAMILY</scope>
    <scope>NOMENCLATURE</scope>
</reference>
<reference key="7">
    <citation type="journal article" date="2007" name="Plant Physiol.">
        <title>Characterization of stress-responsive CIPK genes in rice for stress tolerance improvement.</title>
        <authorList>
            <person name="Xiang Y."/>
            <person name="Huang Y."/>
            <person name="Xiong L."/>
        </authorList>
    </citation>
    <scope>INDUCTION</scope>
</reference>
<gene>
    <name type="primary">CIPK8</name>
    <name type="ordered locus">Os01g0536000</name>
    <name type="ordered locus">LOC_Os01g35184</name>
    <name type="ORF">OSJNBa0086A10.18</name>
</gene>
<dbReference type="EC" id="2.7.11.1"/>
<dbReference type="EMBL" id="AP003449">
    <property type="protein sequence ID" value="BAD87720.1"/>
    <property type="molecule type" value="Genomic_DNA"/>
</dbReference>
<dbReference type="EMBL" id="AP008207">
    <property type="protein sequence ID" value="BAF05173.1"/>
    <property type="molecule type" value="Genomic_DNA"/>
</dbReference>
<dbReference type="EMBL" id="AP014957">
    <property type="protein sequence ID" value="BAS72544.1"/>
    <property type="molecule type" value="Genomic_DNA"/>
</dbReference>
<dbReference type="EMBL" id="AK120431">
    <property type="status" value="NOT_ANNOTATED_CDS"/>
    <property type="molecule type" value="mRNA"/>
</dbReference>
<dbReference type="RefSeq" id="XP_015621427.1">
    <property type="nucleotide sequence ID" value="XM_015765941.1"/>
</dbReference>
<dbReference type="SMR" id="Q5JLD8"/>
<dbReference type="FunCoup" id="Q5JLD8">
    <property type="interactions" value="1200"/>
</dbReference>
<dbReference type="STRING" id="39947.Q5JLD8"/>
<dbReference type="PaxDb" id="39947-Q5JLD8"/>
<dbReference type="EnsemblPlants" id="Os01t0536000-01">
    <property type="protein sequence ID" value="Os01t0536000-01"/>
    <property type="gene ID" value="Os01g0536000"/>
</dbReference>
<dbReference type="Gramene" id="Os01t0536000-01">
    <property type="protein sequence ID" value="Os01t0536000-01"/>
    <property type="gene ID" value="Os01g0536000"/>
</dbReference>
<dbReference type="KEGG" id="dosa:Os01g0536000"/>
<dbReference type="eggNOG" id="KOG0583">
    <property type="taxonomic scope" value="Eukaryota"/>
</dbReference>
<dbReference type="HOGENOM" id="CLU_000288_59_0_1"/>
<dbReference type="InParanoid" id="Q5JLD8"/>
<dbReference type="OMA" id="IWKPPTE"/>
<dbReference type="OrthoDB" id="193931at2759"/>
<dbReference type="Proteomes" id="UP000000763">
    <property type="component" value="Chromosome 1"/>
</dbReference>
<dbReference type="Proteomes" id="UP000059680">
    <property type="component" value="Chromosome 1"/>
</dbReference>
<dbReference type="GO" id="GO:0005524">
    <property type="term" value="F:ATP binding"/>
    <property type="evidence" value="ECO:0007669"/>
    <property type="project" value="UniProtKB-KW"/>
</dbReference>
<dbReference type="GO" id="GO:0106310">
    <property type="term" value="F:protein serine kinase activity"/>
    <property type="evidence" value="ECO:0007669"/>
    <property type="project" value="RHEA"/>
</dbReference>
<dbReference type="GO" id="GO:0004674">
    <property type="term" value="F:protein serine/threonine kinase activity"/>
    <property type="evidence" value="ECO:0000318"/>
    <property type="project" value="GO_Central"/>
</dbReference>
<dbReference type="GO" id="GO:0010167">
    <property type="term" value="P:response to nitrate"/>
    <property type="evidence" value="ECO:0007669"/>
    <property type="project" value="EnsemblPlants"/>
</dbReference>
<dbReference type="GO" id="GO:0048364">
    <property type="term" value="P:root development"/>
    <property type="evidence" value="ECO:0007669"/>
    <property type="project" value="EnsemblPlants"/>
</dbReference>
<dbReference type="GO" id="GO:0007165">
    <property type="term" value="P:signal transduction"/>
    <property type="evidence" value="ECO:0007669"/>
    <property type="project" value="InterPro"/>
</dbReference>
<dbReference type="CDD" id="cd12195">
    <property type="entry name" value="CIPK_C"/>
    <property type="match status" value="1"/>
</dbReference>
<dbReference type="FunFam" id="1.10.510.10:FF:000279">
    <property type="entry name" value="Non-specific serine/threonine protein kinase"/>
    <property type="match status" value="1"/>
</dbReference>
<dbReference type="FunFam" id="3.30.200.20:FF:000096">
    <property type="entry name" value="Non-specific serine/threonine protein kinase"/>
    <property type="match status" value="1"/>
</dbReference>
<dbReference type="FunFam" id="3.30.310.80:FF:000002">
    <property type="entry name" value="Non-specific serine/threonine protein kinase"/>
    <property type="match status" value="1"/>
</dbReference>
<dbReference type="Gene3D" id="3.30.310.80">
    <property type="entry name" value="Kinase associated domain 1, KA1"/>
    <property type="match status" value="1"/>
</dbReference>
<dbReference type="Gene3D" id="1.10.510.10">
    <property type="entry name" value="Transferase(Phosphotransferase) domain 1"/>
    <property type="match status" value="1"/>
</dbReference>
<dbReference type="InterPro" id="IPR011009">
    <property type="entry name" value="Kinase-like_dom_sf"/>
</dbReference>
<dbReference type="InterPro" id="IPR018451">
    <property type="entry name" value="NAF/FISL_domain"/>
</dbReference>
<dbReference type="InterPro" id="IPR004041">
    <property type="entry name" value="NAF_dom"/>
</dbReference>
<dbReference type="InterPro" id="IPR000719">
    <property type="entry name" value="Prot_kinase_dom"/>
</dbReference>
<dbReference type="InterPro" id="IPR017441">
    <property type="entry name" value="Protein_kinase_ATP_BS"/>
</dbReference>
<dbReference type="InterPro" id="IPR008271">
    <property type="entry name" value="Ser/Thr_kinase_AS"/>
</dbReference>
<dbReference type="PANTHER" id="PTHR43895">
    <property type="entry name" value="CALCIUM/CALMODULIN-DEPENDENT PROTEIN KINASE KINASE-RELATED"/>
    <property type="match status" value="1"/>
</dbReference>
<dbReference type="PANTHER" id="PTHR43895:SF114">
    <property type="entry name" value="NON-SPECIFIC SERINE_THREONINE PROTEIN KINASE"/>
    <property type="match status" value="1"/>
</dbReference>
<dbReference type="Pfam" id="PF03822">
    <property type="entry name" value="NAF"/>
    <property type="match status" value="1"/>
</dbReference>
<dbReference type="Pfam" id="PF00069">
    <property type="entry name" value="Pkinase"/>
    <property type="match status" value="1"/>
</dbReference>
<dbReference type="SMART" id="SM00220">
    <property type="entry name" value="S_TKc"/>
    <property type="match status" value="1"/>
</dbReference>
<dbReference type="SUPFAM" id="SSF56112">
    <property type="entry name" value="Protein kinase-like (PK-like)"/>
    <property type="match status" value="1"/>
</dbReference>
<dbReference type="PROSITE" id="PS50816">
    <property type="entry name" value="NAF"/>
    <property type="match status" value="1"/>
</dbReference>
<dbReference type="PROSITE" id="PS00107">
    <property type="entry name" value="PROTEIN_KINASE_ATP"/>
    <property type="match status" value="1"/>
</dbReference>
<dbReference type="PROSITE" id="PS50011">
    <property type="entry name" value="PROTEIN_KINASE_DOM"/>
    <property type="match status" value="1"/>
</dbReference>
<dbReference type="PROSITE" id="PS00108">
    <property type="entry name" value="PROTEIN_KINASE_ST"/>
    <property type="match status" value="1"/>
</dbReference>
<protein>
    <recommendedName>
        <fullName>CBL-interacting protein kinase 8</fullName>
        <ecNumber>2.7.11.1</ecNumber>
    </recommendedName>
    <alternativeName>
        <fullName>OsCIPK08</fullName>
    </alternativeName>
</protein>
<feature type="chain" id="PRO_0000338366" description="CBL-interacting protein kinase 8">
    <location>
        <begin position="1"/>
        <end position="446"/>
    </location>
</feature>
<feature type="domain" description="Protein kinase" evidence="2">
    <location>
        <begin position="13"/>
        <end position="266"/>
    </location>
</feature>
<feature type="domain" description="NAF" evidence="3">
    <location>
        <begin position="301"/>
        <end position="329"/>
    </location>
</feature>
<feature type="region of interest" description="Activation loop" evidence="1">
    <location>
        <begin position="154"/>
        <end position="181"/>
    </location>
</feature>
<feature type="region of interest" description="PPI" evidence="1">
    <location>
        <begin position="336"/>
        <end position="365"/>
    </location>
</feature>
<feature type="active site" description="Proton acceptor" evidence="2 4">
    <location>
        <position position="136"/>
    </location>
</feature>
<feature type="binding site" evidence="2">
    <location>
        <begin position="19"/>
        <end position="27"/>
    </location>
    <ligand>
        <name>ATP</name>
        <dbReference type="ChEBI" id="CHEBI:30616"/>
    </ligand>
</feature>
<feature type="binding site" evidence="2">
    <location>
        <position position="42"/>
    </location>
    <ligand>
        <name>ATP</name>
        <dbReference type="ChEBI" id="CHEBI:30616"/>
    </ligand>
</feature>
<proteinExistence type="evidence at transcript level"/>
<comment type="function">
    <text evidence="1">CIPK serine-threonine protein kinases interact with CBL proteins. Binding of a CBL protein to the regulatory NAF domain of CIPK protein lead to the activation of the kinase in a calcium-dependent manner (By similarity).</text>
</comment>
<comment type="catalytic activity">
    <reaction>
        <text>L-seryl-[protein] + ATP = O-phospho-L-seryl-[protein] + ADP + H(+)</text>
        <dbReference type="Rhea" id="RHEA:17989"/>
        <dbReference type="Rhea" id="RHEA-COMP:9863"/>
        <dbReference type="Rhea" id="RHEA-COMP:11604"/>
        <dbReference type="ChEBI" id="CHEBI:15378"/>
        <dbReference type="ChEBI" id="CHEBI:29999"/>
        <dbReference type="ChEBI" id="CHEBI:30616"/>
        <dbReference type="ChEBI" id="CHEBI:83421"/>
        <dbReference type="ChEBI" id="CHEBI:456216"/>
        <dbReference type="EC" id="2.7.11.1"/>
    </reaction>
</comment>
<comment type="catalytic activity">
    <reaction>
        <text>L-threonyl-[protein] + ATP = O-phospho-L-threonyl-[protein] + ADP + H(+)</text>
        <dbReference type="Rhea" id="RHEA:46608"/>
        <dbReference type="Rhea" id="RHEA-COMP:11060"/>
        <dbReference type="Rhea" id="RHEA-COMP:11605"/>
        <dbReference type="ChEBI" id="CHEBI:15378"/>
        <dbReference type="ChEBI" id="CHEBI:30013"/>
        <dbReference type="ChEBI" id="CHEBI:30616"/>
        <dbReference type="ChEBI" id="CHEBI:61977"/>
        <dbReference type="ChEBI" id="CHEBI:456216"/>
        <dbReference type="EC" id="2.7.11.1"/>
    </reaction>
</comment>
<comment type="cofactor">
    <cofactor evidence="1">
        <name>Mn(2+)</name>
        <dbReference type="ChEBI" id="CHEBI:29035"/>
    </cofactor>
</comment>
<comment type="induction">
    <text evidence="5">By salt stress.</text>
</comment>
<comment type="domain">
    <text evidence="1">The activation loop within the kinase domain is the target of phosphorylation/activation by upstream protein kinases. The PPI motif mediates the interaction with the ABI (abscisic acid-insensitive) phosphatases (By similarity).</text>
</comment>
<comment type="similarity">
    <text evidence="6">Belongs to the protein kinase superfamily. CAMK Ser/Thr protein kinase family. SNF1 subfamily.</text>
</comment>
<comment type="sequence caution" evidence="6">
    <conflict type="frameshift">
        <sequence resource="EMBL" id="AK120431"/>
    </conflict>
</comment>
<keyword id="KW-0067">ATP-binding</keyword>
<keyword id="KW-0418">Kinase</keyword>
<keyword id="KW-0464">Manganese</keyword>
<keyword id="KW-0547">Nucleotide-binding</keyword>
<keyword id="KW-1185">Reference proteome</keyword>
<keyword id="KW-0723">Serine/threonine-protein kinase</keyword>
<keyword id="KW-0808">Transferase</keyword>